<dbReference type="EMBL" id="CP000024">
    <property type="protein sequence ID" value="AAV63436.1"/>
    <property type="molecule type" value="Genomic_DNA"/>
</dbReference>
<dbReference type="RefSeq" id="WP_002946158.1">
    <property type="nucleotide sequence ID" value="NC_006449.1"/>
</dbReference>
<dbReference type="SMR" id="Q5LXS2"/>
<dbReference type="GeneID" id="66899651"/>
<dbReference type="KEGG" id="stc:str1923"/>
<dbReference type="HOGENOM" id="CLU_093315_2_0_9"/>
<dbReference type="GO" id="GO:1990904">
    <property type="term" value="C:ribonucleoprotein complex"/>
    <property type="evidence" value="ECO:0007669"/>
    <property type="project" value="UniProtKB-KW"/>
</dbReference>
<dbReference type="GO" id="GO:0005840">
    <property type="term" value="C:ribosome"/>
    <property type="evidence" value="ECO:0007669"/>
    <property type="project" value="UniProtKB-KW"/>
</dbReference>
<dbReference type="GO" id="GO:0019843">
    <property type="term" value="F:rRNA binding"/>
    <property type="evidence" value="ECO:0007669"/>
    <property type="project" value="UniProtKB-UniRule"/>
</dbReference>
<dbReference type="GO" id="GO:0003735">
    <property type="term" value="F:structural constituent of ribosome"/>
    <property type="evidence" value="ECO:0007669"/>
    <property type="project" value="InterPro"/>
</dbReference>
<dbReference type="GO" id="GO:0006412">
    <property type="term" value="P:translation"/>
    <property type="evidence" value="ECO:0007669"/>
    <property type="project" value="UniProtKB-UniRule"/>
</dbReference>
<dbReference type="CDD" id="cd06089">
    <property type="entry name" value="KOW_RPL26"/>
    <property type="match status" value="1"/>
</dbReference>
<dbReference type="FunFam" id="2.30.30.30:FF:000004">
    <property type="entry name" value="50S ribosomal protein L24"/>
    <property type="match status" value="1"/>
</dbReference>
<dbReference type="Gene3D" id="2.30.30.30">
    <property type="match status" value="1"/>
</dbReference>
<dbReference type="HAMAP" id="MF_01326_B">
    <property type="entry name" value="Ribosomal_uL24_B"/>
    <property type="match status" value="1"/>
</dbReference>
<dbReference type="InterPro" id="IPR005824">
    <property type="entry name" value="KOW"/>
</dbReference>
<dbReference type="InterPro" id="IPR014722">
    <property type="entry name" value="Rib_uL2_dom2"/>
</dbReference>
<dbReference type="InterPro" id="IPR003256">
    <property type="entry name" value="Ribosomal_uL24"/>
</dbReference>
<dbReference type="InterPro" id="IPR005825">
    <property type="entry name" value="Ribosomal_uL24_CS"/>
</dbReference>
<dbReference type="InterPro" id="IPR041988">
    <property type="entry name" value="Ribosomal_uL24_KOW"/>
</dbReference>
<dbReference type="InterPro" id="IPR008991">
    <property type="entry name" value="Translation_prot_SH3-like_sf"/>
</dbReference>
<dbReference type="NCBIfam" id="TIGR01079">
    <property type="entry name" value="rplX_bact"/>
    <property type="match status" value="1"/>
</dbReference>
<dbReference type="PANTHER" id="PTHR12903">
    <property type="entry name" value="MITOCHONDRIAL RIBOSOMAL PROTEIN L24"/>
    <property type="match status" value="1"/>
</dbReference>
<dbReference type="Pfam" id="PF00467">
    <property type="entry name" value="KOW"/>
    <property type="match status" value="1"/>
</dbReference>
<dbReference type="Pfam" id="PF17136">
    <property type="entry name" value="ribosomal_L24"/>
    <property type="match status" value="1"/>
</dbReference>
<dbReference type="SMART" id="SM00739">
    <property type="entry name" value="KOW"/>
    <property type="match status" value="1"/>
</dbReference>
<dbReference type="SUPFAM" id="SSF50104">
    <property type="entry name" value="Translation proteins SH3-like domain"/>
    <property type="match status" value="1"/>
</dbReference>
<dbReference type="PROSITE" id="PS01108">
    <property type="entry name" value="RIBOSOMAL_L24"/>
    <property type="match status" value="1"/>
</dbReference>
<proteinExistence type="inferred from homology"/>
<organism>
    <name type="scientific">Streptococcus thermophilus (strain CNRZ 1066)</name>
    <dbReference type="NCBI Taxonomy" id="299768"/>
    <lineage>
        <taxon>Bacteria</taxon>
        <taxon>Bacillati</taxon>
        <taxon>Bacillota</taxon>
        <taxon>Bacilli</taxon>
        <taxon>Lactobacillales</taxon>
        <taxon>Streptococcaceae</taxon>
        <taxon>Streptococcus</taxon>
    </lineage>
</organism>
<name>RL24_STRT1</name>
<feature type="chain" id="PRO_0000241670" description="Large ribosomal subunit protein uL24">
    <location>
        <begin position="1"/>
        <end position="101"/>
    </location>
</feature>
<keyword id="KW-0687">Ribonucleoprotein</keyword>
<keyword id="KW-0689">Ribosomal protein</keyword>
<keyword id="KW-0694">RNA-binding</keyword>
<keyword id="KW-0699">rRNA-binding</keyword>
<comment type="function">
    <text evidence="1">One of two assembly initiator proteins, it binds directly to the 5'-end of the 23S rRNA, where it nucleates assembly of the 50S subunit.</text>
</comment>
<comment type="function">
    <text evidence="1">One of the proteins that surrounds the polypeptide exit tunnel on the outside of the subunit.</text>
</comment>
<comment type="subunit">
    <text evidence="1">Part of the 50S ribosomal subunit.</text>
</comment>
<comment type="similarity">
    <text evidence="1">Belongs to the universal ribosomal protein uL24 family.</text>
</comment>
<accession>Q5LXS2</accession>
<protein>
    <recommendedName>
        <fullName evidence="1">Large ribosomal subunit protein uL24</fullName>
    </recommendedName>
    <alternativeName>
        <fullName evidence="2">50S ribosomal protein L24</fullName>
    </alternativeName>
</protein>
<sequence length="101" mass="10871">MFVKKGDKVRVIAGKDKGTEAVVLKALPKVNKVVVEGVAIIKKHQKPSTENPQGAIVEKEAPIHASNVQVLDKNGVAGRVGYKVVDGKKVRYNKKSGEVLD</sequence>
<reference key="1">
    <citation type="journal article" date="2004" name="Nat. Biotechnol.">
        <title>Complete sequence and comparative genome analysis of the dairy bacterium Streptococcus thermophilus.</title>
        <authorList>
            <person name="Bolotin A."/>
            <person name="Quinquis B."/>
            <person name="Renault P."/>
            <person name="Sorokin A."/>
            <person name="Ehrlich S.D."/>
            <person name="Kulakauskas S."/>
            <person name="Lapidus A."/>
            <person name="Goltsman E."/>
            <person name="Mazur M."/>
            <person name="Pusch G.D."/>
            <person name="Fonstein M."/>
            <person name="Overbeek R."/>
            <person name="Kyprides N."/>
            <person name="Purnelle B."/>
            <person name="Prozzi D."/>
            <person name="Ngui K."/>
            <person name="Masuy D."/>
            <person name="Hancy F."/>
            <person name="Burteau S."/>
            <person name="Boutry M."/>
            <person name="Delcour J."/>
            <person name="Goffeau A."/>
            <person name="Hols P."/>
        </authorList>
    </citation>
    <scope>NUCLEOTIDE SEQUENCE [LARGE SCALE GENOMIC DNA]</scope>
    <source>
        <strain>CNRZ 1066</strain>
    </source>
</reference>
<evidence type="ECO:0000255" key="1">
    <source>
        <dbReference type="HAMAP-Rule" id="MF_01326"/>
    </source>
</evidence>
<evidence type="ECO:0000305" key="2"/>
<gene>
    <name evidence="1" type="primary">rplX</name>
    <name type="ordered locus">str1923</name>
</gene>